<accession>P0C9H4</accession>
<keyword id="KW-0244">Early protein</keyword>
<keyword id="KW-0325">Glycoprotein</keyword>
<keyword id="KW-0732">Signal</keyword>
<organism>
    <name type="scientific">African swine fever virus (isolate Warthog/Namibia/Wart80/1980)</name>
    <name type="common">ASFV</name>
    <dbReference type="NCBI Taxonomy" id="561444"/>
    <lineage>
        <taxon>Viruses</taxon>
        <taxon>Varidnaviria</taxon>
        <taxon>Bamfordvirae</taxon>
        <taxon>Nucleocytoviricota</taxon>
        <taxon>Pokkesviricetes</taxon>
        <taxon>Asfuvirales</taxon>
        <taxon>Asfarviridae</taxon>
        <taxon>Asfivirus</taxon>
        <taxon>African swine fever virus</taxon>
    </lineage>
</organism>
<dbReference type="EMBL" id="AY261366">
    <property type="status" value="NOT_ANNOTATED_CDS"/>
    <property type="molecule type" value="Genomic_DNA"/>
</dbReference>
<dbReference type="SMR" id="P0C9H4"/>
<dbReference type="Proteomes" id="UP000000858">
    <property type="component" value="Segment"/>
</dbReference>
<dbReference type="InterPro" id="IPR004848">
    <property type="entry name" value="ASFV_fam_110"/>
</dbReference>
<dbReference type="Pfam" id="PF01639">
    <property type="entry name" value="v110"/>
    <property type="match status" value="1"/>
</dbReference>
<organismHost>
    <name type="scientific">Ornithodoros</name>
    <name type="common">relapsing fever ticks</name>
    <dbReference type="NCBI Taxonomy" id="6937"/>
</organismHost>
<organismHost>
    <name type="scientific">Phacochoerus aethiopicus</name>
    <name type="common">Warthog</name>
    <dbReference type="NCBI Taxonomy" id="85517"/>
</organismHost>
<organismHost>
    <name type="scientific">Phacochoerus africanus</name>
    <name type="common">Warthog</name>
    <dbReference type="NCBI Taxonomy" id="41426"/>
</organismHost>
<organismHost>
    <name type="scientific">Potamochoerus larvatus</name>
    <name type="common">Bushpig</name>
    <dbReference type="NCBI Taxonomy" id="273792"/>
</organismHost>
<organismHost>
    <name type="scientific">Sus scrofa</name>
    <name type="common">Pig</name>
    <dbReference type="NCBI Taxonomy" id="9823"/>
</organismHost>
<protein>
    <recommendedName>
        <fullName>Protein MGF 110-5L</fullName>
    </recommendedName>
</protein>
<evidence type="ECO:0000250" key="1"/>
<evidence type="ECO:0000250" key="2">
    <source>
        <dbReference type="UniProtKB" id="A9JLI7"/>
    </source>
</evidence>
<evidence type="ECO:0000255" key="3"/>
<evidence type="ECO:0000305" key="4"/>
<sequence length="121" mass="14109">MLVIFLGILGLLANQVSSQLVGQLHPTENPSENELEYWCTYMECCQFCWDCQNGLCVNKLGNTTILENEYVHPCIVSRWLNKCMYDLGQGIDHVMVCSQPKYWNPYKILKKEWKENNSQNK</sequence>
<name>1105L_ASFWA</name>
<gene>
    <name type="ordered locus">War-011</name>
</gene>
<comment type="function">
    <text evidence="1">Plays a role in virus cell tropism, and may be required for efficient virus replication in macrophages.</text>
</comment>
<comment type="induction">
    <text evidence="4">Expressed in the early phase of the viral replicative cycle.</text>
</comment>
<comment type="similarity">
    <text evidence="4">Belongs to the asfivirus MGF 110 family.</text>
</comment>
<feature type="signal peptide" evidence="2">
    <location>
        <begin position="1"/>
        <end position="28"/>
    </location>
</feature>
<feature type="chain" id="PRO_0000373196" description="Protein MGF 110-5L">
    <location>
        <begin position="29"/>
        <end position="121"/>
    </location>
</feature>
<feature type="glycosylation site" description="N-linked (GlcNAc...) asparagine; by host" evidence="3">
    <location>
        <position position="62"/>
    </location>
</feature>
<feature type="glycosylation site" description="N-linked (GlcNAc...) asparagine; by host" evidence="3">
    <location>
        <position position="116"/>
    </location>
</feature>
<proteinExistence type="inferred from homology"/>
<reference key="1">
    <citation type="submission" date="2003-03" db="EMBL/GenBank/DDBJ databases">
        <title>African swine fever virus genomes.</title>
        <authorList>
            <person name="Kutish G.F."/>
            <person name="Rock D.L."/>
        </authorList>
    </citation>
    <scope>NUCLEOTIDE SEQUENCE [LARGE SCALE GENOMIC DNA]</scope>
</reference>